<name>CC184_RAT</name>
<sequence length="193" mass="20390">MEDSLLEIMTKDGGDMPAPLEVSTVPAVGDVISGEYNGGMKELMEHLKAQLQALFEDVRAMRGALDEQASHIQVLSDDVCANQRAIVSMCQIMTTAPRQGGLGVAGGKGSFPSVPHEPETPSPGIGDSGLLGRDPDEEDEEEEEEKETASPATPTSHCERSESPGLLGENGPLVEPLDLPDITLLQLEGEASL</sequence>
<accession>Q4V8F1</accession>
<proteinExistence type="evidence at transcript level"/>
<feature type="chain" id="PRO_0000335683" description="Coiled-coil domain-containing protein 184">
    <location>
        <begin position="1"/>
        <end position="193"/>
    </location>
</feature>
<feature type="region of interest" description="Disordered" evidence="2">
    <location>
        <begin position="101"/>
        <end position="176"/>
    </location>
</feature>
<feature type="coiled-coil region" evidence="1">
    <location>
        <begin position="39"/>
        <end position="68"/>
    </location>
</feature>
<feature type="compositionally biased region" description="Acidic residues" evidence="2">
    <location>
        <begin position="135"/>
        <end position="146"/>
    </location>
</feature>
<gene>
    <name type="primary">Ccdc184</name>
</gene>
<protein>
    <recommendedName>
        <fullName>Coiled-coil domain-containing protein 184</fullName>
    </recommendedName>
</protein>
<dbReference type="EMBL" id="BC097418">
    <property type="protein sequence ID" value="AAH97418.1"/>
    <property type="molecule type" value="mRNA"/>
</dbReference>
<dbReference type="RefSeq" id="NP_001020080.1">
    <property type="nucleotide sequence ID" value="NM_001024909.1"/>
</dbReference>
<dbReference type="RefSeq" id="XP_017450550.1">
    <property type="nucleotide sequence ID" value="XM_017595061.1"/>
</dbReference>
<dbReference type="RefSeq" id="XP_017450551.1">
    <property type="nucleotide sequence ID" value="XM_017595062.1"/>
</dbReference>
<dbReference type="FunCoup" id="Q4V8F1">
    <property type="interactions" value="477"/>
</dbReference>
<dbReference type="STRING" id="10116.ENSRNOP00000038126"/>
<dbReference type="GlyGen" id="Q4V8F1">
    <property type="glycosylation" value="1 site"/>
</dbReference>
<dbReference type="PhosphoSitePlus" id="Q4V8F1"/>
<dbReference type="PaxDb" id="10116-ENSRNOP00000038126"/>
<dbReference type="Ensembl" id="ENSRNOT00000031157.4">
    <property type="protein sequence ID" value="ENSRNOP00000038126.3"/>
    <property type="gene ID" value="ENSRNOG00000021945.4"/>
</dbReference>
<dbReference type="GeneID" id="500925"/>
<dbReference type="KEGG" id="rno:500925"/>
<dbReference type="UCSC" id="RGD:1593153">
    <property type="organism name" value="rat"/>
</dbReference>
<dbReference type="AGR" id="RGD:1593153"/>
<dbReference type="CTD" id="387856"/>
<dbReference type="RGD" id="1593153">
    <property type="gene designation" value="Ccdc184"/>
</dbReference>
<dbReference type="eggNOG" id="ENOG502RNYW">
    <property type="taxonomic scope" value="Eukaryota"/>
</dbReference>
<dbReference type="GeneTree" id="ENSGT00390000002978"/>
<dbReference type="HOGENOM" id="CLU_125035_0_0_1"/>
<dbReference type="InParanoid" id="Q4V8F1"/>
<dbReference type="OMA" id="KEWGCGS"/>
<dbReference type="OrthoDB" id="9607032at2759"/>
<dbReference type="PhylomeDB" id="Q4V8F1"/>
<dbReference type="TreeFam" id="TF337201"/>
<dbReference type="PRO" id="PR:Q4V8F1"/>
<dbReference type="Proteomes" id="UP000002494">
    <property type="component" value="Chromosome 7"/>
</dbReference>
<dbReference type="Bgee" id="ENSRNOG00000021945">
    <property type="expression patterns" value="Expressed in testis and 7 other cell types or tissues"/>
</dbReference>
<dbReference type="GO" id="GO:0005737">
    <property type="term" value="C:cytoplasm"/>
    <property type="evidence" value="ECO:0000318"/>
    <property type="project" value="GO_Central"/>
</dbReference>
<dbReference type="InterPro" id="IPR031458">
    <property type="entry name" value="DUF4677"/>
</dbReference>
<dbReference type="PANTHER" id="PTHR31554">
    <property type="entry name" value="COILED-COIL DOMAIN-CONTAINING PROTEIN 184"/>
    <property type="match status" value="1"/>
</dbReference>
<dbReference type="PANTHER" id="PTHR31554:SF2">
    <property type="entry name" value="COILED-COIL DOMAIN-CONTAINING PROTEIN 184"/>
    <property type="match status" value="1"/>
</dbReference>
<dbReference type="Pfam" id="PF15726">
    <property type="entry name" value="DUF4677"/>
    <property type="match status" value="1"/>
</dbReference>
<reference key="1">
    <citation type="journal article" date="2004" name="Genome Res.">
        <title>The status, quality, and expansion of the NIH full-length cDNA project: the Mammalian Gene Collection (MGC).</title>
        <authorList>
            <consortium name="The MGC Project Team"/>
        </authorList>
    </citation>
    <scope>NUCLEOTIDE SEQUENCE [LARGE SCALE MRNA]</scope>
    <source>
        <tissue>Testis</tissue>
    </source>
</reference>
<keyword id="KW-0175">Coiled coil</keyword>
<keyword id="KW-1185">Reference proteome</keyword>
<organism>
    <name type="scientific">Rattus norvegicus</name>
    <name type="common">Rat</name>
    <dbReference type="NCBI Taxonomy" id="10116"/>
    <lineage>
        <taxon>Eukaryota</taxon>
        <taxon>Metazoa</taxon>
        <taxon>Chordata</taxon>
        <taxon>Craniata</taxon>
        <taxon>Vertebrata</taxon>
        <taxon>Euteleostomi</taxon>
        <taxon>Mammalia</taxon>
        <taxon>Eutheria</taxon>
        <taxon>Euarchontoglires</taxon>
        <taxon>Glires</taxon>
        <taxon>Rodentia</taxon>
        <taxon>Myomorpha</taxon>
        <taxon>Muroidea</taxon>
        <taxon>Muridae</taxon>
        <taxon>Murinae</taxon>
        <taxon>Rattus</taxon>
    </lineage>
</organism>
<evidence type="ECO:0000255" key="1"/>
<evidence type="ECO:0000256" key="2">
    <source>
        <dbReference type="SAM" id="MobiDB-lite"/>
    </source>
</evidence>